<keyword id="KW-0408">Iron</keyword>
<keyword id="KW-0479">Metal-binding</keyword>
<keyword id="KW-0560">Oxidoreductase</keyword>
<keyword id="KW-1185">Reference proteome</keyword>
<reference key="1">
    <citation type="journal article" date="2002" name="Environ. Microbiol.">
        <title>Complete genome sequence and comparative analysis of the metabolically versatile Pseudomonas putida KT2440.</title>
        <authorList>
            <person name="Nelson K.E."/>
            <person name="Weinel C."/>
            <person name="Paulsen I.T."/>
            <person name="Dodson R.J."/>
            <person name="Hilbert H."/>
            <person name="Martins dos Santos V.A.P."/>
            <person name="Fouts D.E."/>
            <person name="Gill S.R."/>
            <person name="Pop M."/>
            <person name="Holmes M."/>
            <person name="Brinkac L.M."/>
            <person name="Beanan M.J."/>
            <person name="DeBoy R.T."/>
            <person name="Daugherty S.C."/>
            <person name="Kolonay J.F."/>
            <person name="Madupu R."/>
            <person name="Nelson W.C."/>
            <person name="White O."/>
            <person name="Peterson J.D."/>
            <person name="Khouri H.M."/>
            <person name="Hance I."/>
            <person name="Chris Lee P."/>
            <person name="Holtzapple E.K."/>
            <person name="Scanlan D."/>
            <person name="Tran K."/>
            <person name="Moazzez A."/>
            <person name="Utterback T.R."/>
            <person name="Rizzo M."/>
            <person name="Lee K."/>
            <person name="Kosack D."/>
            <person name="Moestl D."/>
            <person name="Wedler H."/>
            <person name="Lauber J."/>
            <person name="Stjepandic D."/>
            <person name="Hoheisel J."/>
            <person name="Straetz M."/>
            <person name="Heim S."/>
            <person name="Kiewitz C."/>
            <person name="Eisen J.A."/>
            <person name="Timmis K.N."/>
            <person name="Duesterhoeft A."/>
            <person name="Tuemmler B."/>
            <person name="Fraser C.M."/>
        </authorList>
    </citation>
    <scope>NUCLEOTIDE SEQUENCE [LARGE SCALE GENOMIC DNA]</scope>
    <source>
        <strain>ATCC 47054 / DSM 6125 / CFBP 8728 / NCIMB 11950 / KT2440</strain>
    </source>
</reference>
<evidence type="ECO:0000250" key="1"/>
<evidence type="ECO:0000305" key="2"/>
<feature type="initiator methionine" description="Removed" evidence="1">
    <location>
        <position position="1"/>
    </location>
</feature>
<feature type="chain" id="PRO_0000159996" description="Superoxide dismutase [Fe]">
    <location>
        <begin position="2"/>
        <end position="198"/>
    </location>
</feature>
<feature type="binding site" evidence="1">
    <location>
        <position position="27"/>
    </location>
    <ligand>
        <name>Fe cation</name>
        <dbReference type="ChEBI" id="CHEBI:24875"/>
    </ligand>
</feature>
<feature type="binding site" evidence="1">
    <location>
        <position position="74"/>
    </location>
    <ligand>
        <name>Fe cation</name>
        <dbReference type="ChEBI" id="CHEBI:24875"/>
    </ligand>
</feature>
<feature type="binding site" evidence="1">
    <location>
        <position position="157"/>
    </location>
    <ligand>
        <name>Fe cation</name>
        <dbReference type="ChEBI" id="CHEBI:24875"/>
    </ligand>
</feature>
<feature type="binding site" evidence="1">
    <location>
        <position position="161"/>
    </location>
    <ligand>
        <name>Fe cation</name>
        <dbReference type="ChEBI" id="CHEBI:24875"/>
    </ligand>
</feature>
<name>SODF_PSEPK</name>
<gene>
    <name type="primary">sodB</name>
    <name type="ordered locus">PP_0915</name>
</gene>
<dbReference type="EC" id="1.15.1.1"/>
<dbReference type="EMBL" id="AE015451">
    <property type="protein sequence ID" value="AAN66540.1"/>
    <property type="molecule type" value="Genomic_DNA"/>
</dbReference>
<dbReference type="RefSeq" id="NP_743076.1">
    <property type="nucleotide sequence ID" value="NC_002947.4"/>
</dbReference>
<dbReference type="RefSeq" id="WP_003255187.1">
    <property type="nucleotide sequence ID" value="NZ_CP169744.1"/>
</dbReference>
<dbReference type="SMR" id="Q88PD5"/>
<dbReference type="STRING" id="160488.PP_0915"/>
<dbReference type="PaxDb" id="160488-PP_0915"/>
<dbReference type="KEGG" id="ppu:PP_0915"/>
<dbReference type="PATRIC" id="fig|160488.4.peg.975"/>
<dbReference type="eggNOG" id="COG0605">
    <property type="taxonomic scope" value="Bacteria"/>
</dbReference>
<dbReference type="HOGENOM" id="CLU_031625_0_0_6"/>
<dbReference type="OrthoDB" id="9803125at2"/>
<dbReference type="PhylomeDB" id="Q88PD5"/>
<dbReference type="BioCyc" id="PPUT160488:G1G01-989-MONOMER"/>
<dbReference type="Proteomes" id="UP000000556">
    <property type="component" value="Chromosome"/>
</dbReference>
<dbReference type="GO" id="GO:0046872">
    <property type="term" value="F:metal ion binding"/>
    <property type="evidence" value="ECO:0007669"/>
    <property type="project" value="UniProtKB-KW"/>
</dbReference>
<dbReference type="GO" id="GO:0004784">
    <property type="term" value="F:superoxide dismutase activity"/>
    <property type="evidence" value="ECO:0007669"/>
    <property type="project" value="UniProtKB-EC"/>
</dbReference>
<dbReference type="FunFam" id="1.10.287.990:FF:000002">
    <property type="entry name" value="Superoxide dismutase"/>
    <property type="match status" value="1"/>
</dbReference>
<dbReference type="FunFam" id="3.55.40.20:FF:000001">
    <property type="entry name" value="Superoxide dismutase"/>
    <property type="match status" value="1"/>
</dbReference>
<dbReference type="Gene3D" id="1.10.287.990">
    <property type="entry name" value="Fe,Mn superoxide dismutase (SOD) domain"/>
    <property type="match status" value="1"/>
</dbReference>
<dbReference type="Gene3D" id="3.55.40.20">
    <property type="entry name" value="Iron/manganese superoxide dismutase, C-terminal domain"/>
    <property type="match status" value="1"/>
</dbReference>
<dbReference type="InterPro" id="IPR001189">
    <property type="entry name" value="Mn/Fe_SOD"/>
</dbReference>
<dbReference type="InterPro" id="IPR019833">
    <property type="entry name" value="Mn/Fe_SOD_BS"/>
</dbReference>
<dbReference type="InterPro" id="IPR019832">
    <property type="entry name" value="Mn/Fe_SOD_C"/>
</dbReference>
<dbReference type="InterPro" id="IPR019831">
    <property type="entry name" value="Mn/Fe_SOD_N"/>
</dbReference>
<dbReference type="InterPro" id="IPR036324">
    <property type="entry name" value="Mn/Fe_SOD_N_sf"/>
</dbReference>
<dbReference type="InterPro" id="IPR036314">
    <property type="entry name" value="SOD_C_sf"/>
</dbReference>
<dbReference type="PANTHER" id="PTHR42769">
    <property type="entry name" value="SUPEROXIDE DISMUTASE"/>
    <property type="match status" value="1"/>
</dbReference>
<dbReference type="PANTHER" id="PTHR42769:SF3">
    <property type="entry name" value="SUPEROXIDE DISMUTASE [FE] 2, CHLOROPLASTIC"/>
    <property type="match status" value="1"/>
</dbReference>
<dbReference type="Pfam" id="PF02777">
    <property type="entry name" value="Sod_Fe_C"/>
    <property type="match status" value="1"/>
</dbReference>
<dbReference type="Pfam" id="PF00081">
    <property type="entry name" value="Sod_Fe_N"/>
    <property type="match status" value="1"/>
</dbReference>
<dbReference type="PIRSF" id="PIRSF000349">
    <property type="entry name" value="SODismutase"/>
    <property type="match status" value="1"/>
</dbReference>
<dbReference type="PRINTS" id="PR01703">
    <property type="entry name" value="MNSODISMTASE"/>
</dbReference>
<dbReference type="SUPFAM" id="SSF54719">
    <property type="entry name" value="Fe,Mn superoxide dismutase (SOD), C-terminal domain"/>
    <property type="match status" value="1"/>
</dbReference>
<dbReference type="SUPFAM" id="SSF46609">
    <property type="entry name" value="Fe,Mn superoxide dismutase (SOD), N-terminal domain"/>
    <property type="match status" value="1"/>
</dbReference>
<dbReference type="PROSITE" id="PS00088">
    <property type="entry name" value="SOD_MN"/>
    <property type="match status" value="1"/>
</dbReference>
<comment type="function">
    <text>Destroys superoxide anion radicals which are normally produced within the cells and which are toxic to biological systems.</text>
</comment>
<comment type="catalytic activity">
    <reaction>
        <text>2 superoxide + 2 H(+) = H2O2 + O2</text>
        <dbReference type="Rhea" id="RHEA:20696"/>
        <dbReference type="ChEBI" id="CHEBI:15378"/>
        <dbReference type="ChEBI" id="CHEBI:15379"/>
        <dbReference type="ChEBI" id="CHEBI:16240"/>
        <dbReference type="ChEBI" id="CHEBI:18421"/>
        <dbReference type="EC" id="1.15.1.1"/>
    </reaction>
</comment>
<comment type="cofactor">
    <cofactor evidence="1">
        <name>Fe cation</name>
        <dbReference type="ChEBI" id="CHEBI:24875"/>
    </cofactor>
    <text evidence="1">Binds 1 Fe cation per subunit.</text>
</comment>
<comment type="subunit">
    <text evidence="1">Homodimer.</text>
</comment>
<comment type="similarity">
    <text evidence="2">Belongs to the iron/manganese superoxide dismutase family.</text>
</comment>
<accession>Q88PD5</accession>
<protein>
    <recommendedName>
        <fullName>Superoxide dismutase [Fe]</fullName>
        <ecNumber>1.15.1.1</ecNumber>
    </recommendedName>
</protein>
<organism>
    <name type="scientific">Pseudomonas putida (strain ATCC 47054 / DSM 6125 / CFBP 8728 / NCIMB 11950 / KT2440)</name>
    <dbReference type="NCBI Taxonomy" id="160488"/>
    <lineage>
        <taxon>Bacteria</taxon>
        <taxon>Pseudomonadati</taxon>
        <taxon>Pseudomonadota</taxon>
        <taxon>Gammaproteobacteria</taxon>
        <taxon>Pseudomonadales</taxon>
        <taxon>Pseudomonadaceae</taxon>
        <taxon>Pseudomonas</taxon>
    </lineage>
</organism>
<proteinExistence type="inferred from homology"/>
<sequence>MAFELPPLPYAHDALQPHISKETLEYHHDKHHNTYVVNLNNLVPGTEFEGKTLEEIVKSSSGGIFNNAAQVWNHTFYWNCLSPNGGGQPTGALADAINAAFGSFDKFKEEFTKTSVGTFGSGWGWLVKKADGSLALASTIGAGCPLTSGDTPLLTCDVWEHAYYIDYRNLRPKYVEAFWNLVNWAFVAEQFEGKTFKA</sequence>